<protein>
    <recommendedName>
        <fullName evidence="4">Tail assembly protein Gp25</fullName>
    </recommendedName>
    <alternativeName>
        <fullName>Gene 25 protein</fullName>
    </alternativeName>
    <alternativeName>
        <fullName>Gp25</fullName>
    </alternativeName>
</protein>
<keyword id="KW-1185">Reference proteome</keyword>
<keyword id="KW-0688">Ribosomal frameshifting</keyword>
<keyword id="KW-1188">Viral release from host cell</keyword>
<keyword id="KW-1245">Viral tail assembly</keyword>
<proteinExistence type="inferred from homology"/>
<evidence type="ECO:0000250" key="1">
    <source>
        <dbReference type="UniProtKB" id="P03734"/>
    </source>
</evidence>
<evidence type="ECO:0000256" key="2">
    <source>
        <dbReference type="SAM" id="MobiDB-lite"/>
    </source>
</evidence>
<evidence type="ECO:0000269" key="3">
    <source>
    </source>
</evidence>
<evidence type="ECO:0000303" key="4">
    <source>
    </source>
</evidence>
<evidence type="ECO:0000305" key="5"/>
<evidence type="ECO:0000312" key="6">
    <source>
        <dbReference type="EMBL" id="CDL92968.1"/>
    </source>
</evidence>
<organism>
    <name type="scientific">Mycobacterium phage L5</name>
    <name type="common">Mycobacteriophage L5</name>
    <dbReference type="NCBI Taxonomy" id="31757"/>
    <lineage>
        <taxon>Viruses</taxon>
        <taxon>Duplodnaviria</taxon>
        <taxon>Heunggongvirae</taxon>
        <taxon>Uroviricota</taxon>
        <taxon>Caudoviricetes</taxon>
        <taxon>Fromanvirus</taxon>
    </lineage>
</organism>
<accession>Q05232</accession>
<accession>W1JB50</accession>
<name>TAP25_BPML5</name>
<sequence length="272" mass="30881">MTNVFTIDAFREEVKKKYAPVLIGLSDDVTVELKPLLKLGQKAREAVVEVFKEFADIPDLEEDDDDELVDEYSLQVCDIIAKAFRLIATKPKKLIAALDEEPDPRIRAELYAAVLNTWKRETQLGGSRALAELIDKFGGAILADLLQYYRVDLRDLFRDEDPLSPRFVLSLVLCLPKDGAFYAERRGGQQYRGWTEDRYALADIYDAIQAGNHILLLANRDPKKPKPKAPKSYPRPDDLEKTTPKPGSFAAMVVRAKKAARERREREEESAE</sequence>
<dbReference type="EMBL" id="Z18946">
    <property type="protein sequence ID" value="CDL92968.1"/>
    <property type="molecule type" value="Genomic_DNA"/>
</dbReference>
<dbReference type="PIR" id="S30970">
    <property type="entry name" value="S30970"/>
</dbReference>
<dbReference type="RefSeq" id="YP_009000607.1">
    <molecule id="Q05232-1"/>
    <property type="nucleotide sequence ID" value="NC_001335.1"/>
</dbReference>
<dbReference type="GeneID" id="18261516"/>
<dbReference type="KEGG" id="vg:18261516"/>
<dbReference type="OrthoDB" id="7980at10239"/>
<dbReference type="Proteomes" id="UP000002123">
    <property type="component" value="Genome"/>
</dbReference>
<dbReference type="GO" id="GO:0098003">
    <property type="term" value="P:viral tail assembly"/>
    <property type="evidence" value="ECO:0007669"/>
    <property type="project" value="UniProtKB-KW"/>
</dbReference>
<dbReference type="GO" id="GO:0075523">
    <property type="term" value="P:viral translational frameshifting"/>
    <property type="evidence" value="ECO:0007669"/>
    <property type="project" value="UniProtKB-KW"/>
</dbReference>
<dbReference type="InterPro" id="IPR020132">
    <property type="entry name" value="Gp24/Gp25"/>
</dbReference>
<dbReference type="Pfam" id="PF17388">
    <property type="entry name" value="GP24_25"/>
    <property type="match status" value="1"/>
</dbReference>
<reference key="1">
    <citation type="journal article" date="1993" name="Mol. Microbiol.">
        <title>DNA sequence, structure and gene expression of mycobacteriophage L5: a phage system for mycobacterial genetics.</title>
        <authorList>
            <person name="Hatfull G.F."/>
            <person name="Sarkis G.J."/>
        </authorList>
    </citation>
    <scope>NUCLEOTIDE SEQUENCE [LARGE SCALE GENOMIC DNA]</scope>
</reference>
<reference key="2">
    <citation type="journal article" date="2004" name="Mol. Cell">
        <title>Conserved translational frameshift in dsDNA bacteriophage tail assembly genes.</title>
        <authorList>
            <person name="Xu J."/>
            <person name="Hendrix R.W."/>
            <person name="Duda R.L."/>
        </authorList>
    </citation>
    <scope>RIBOSOMAL FRAMESHIFT</scope>
</reference>
<feature type="chain" id="PRO_0000164739" description="Tail assembly protein Gp25">
    <location>
        <begin position="1"/>
        <end position="272"/>
    </location>
</feature>
<feature type="region of interest" description="Disordered" evidence="2">
    <location>
        <begin position="219"/>
        <end position="272"/>
    </location>
</feature>
<feature type="compositionally biased region" description="Basic and acidic residues" evidence="2">
    <location>
        <begin position="234"/>
        <end position="243"/>
    </location>
</feature>
<feature type="compositionally biased region" description="Basic and acidic residues" evidence="2">
    <location>
        <begin position="262"/>
        <end position="272"/>
    </location>
</feature>
<comment type="function">
    <text evidence="1">Promotes tail assembly by creating a scaffold for the tail tube proteins. The tail assembly proteins Gp24 and Gp25 would wrap the linear tape measure protein to create a tail assembly scaffold. It would allow polymerization of tail tube protein during which Gp24 and Gp25 are released and therefore are absent from the mature virion. The tail assembly protein Gp25 is produced by a rare -1 ribosomal frameshift. The ratio Gp24/Gp25 is important for proper tail assembly.</text>
</comment>
<comment type="subunit">
    <text evidence="1">Interacts with tail assembly protein Gp24 and tape measure protein.</text>
</comment>
<comment type="alternative products">
    <event type="ribosomal frameshifting"/>
    <isoform>
        <id>Q05232-1</id>
        <name evidence="3">Tail assembly protein Gp25</name>
        <sequence type="displayed"/>
    </isoform>
    <isoform>
        <id>Q05231-1</id>
        <name evidence="3">Tail assembly protein Gp24</name>
        <sequence type="external"/>
    </isoform>
    <text evidence="3">A readthrough event might also occur in addition to the frameshifting event.</text>
</comment>
<comment type="miscellaneous">
    <molecule>Isoform Tail assembly protein Gp25</molecule>
    <text>Produced by -1 ribosomal frameshifting.</text>
</comment>
<comment type="similarity">
    <text evidence="5">Belongs to the L5likevirus tail assembly protein family.</text>
</comment>
<organismHost>
    <name type="scientific">Mycobacterium</name>
    <dbReference type="NCBI Taxonomy" id="1763"/>
</organismHost>
<gene>
    <name type="primary">25</name>
    <name evidence="6" type="ORF">PBI_L5_25</name>
</gene>